<accession>O06636</accession>
<proteinExistence type="predicted"/>
<keyword id="KW-0974">Archaeal flagellum</keyword>
<evidence type="ECO:0000305" key="1"/>
<sequence>MPNISEIIDDIKQKIKLGKKNDTTPLEDDSEDEFSFVLDEETTAESDNDLVAANEELLAKMGELESKFPKIEMMVTNLRKENENLRSDIHNINENFQDMMALYEVVSNQINPFIGISKVTATSMEKVEKIEHESTNLKKRVEELQNDVVILANVYLQEHDIDLDGVINEILAEEEFSKAILGEDSDDW</sequence>
<name>FLAC_METVO</name>
<organism>
    <name type="scientific">Methanococcus voltae</name>
    <dbReference type="NCBI Taxonomy" id="2188"/>
    <lineage>
        <taxon>Archaea</taxon>
        <taxon>Methanobacteriati</taxon>
        <taxon>Methanobacteriota</taxon>
        <taxon>Methanomada group</taxon>
        <taxon>Methanococci</taxon>
        <taxon>Methanococcales</taxon>
        <taxon>Methanococcaceae</taxon>
        <taxon>Methanococcus</taxon>
    </lineage>
</organism>
<reference key="1">
    <citation type="submission" date="1997-04" db="EMBL/GenBank/DDBJ databases">
        <authorList>
            <person name="Bayley D.P."/>
            <person name="Jarrell K.F."/>
        </authorList>
    </citation>
    <scope>NUCLEOTIDE SEQUENCE [GENOMIC DNA]</scope>
    <source>
        <strain>ATCC 33273 / DSM 1537 / NBRC 100457 / OCM 70 / PS</strain>
    </source>
</reference>
<feature type="chain" id="PRO_0000087268" description="Putative flagella-related protein C">
    <location>
        <begin position="1"/>
        <end position="188"/>
    </location>
</feature>
<dbReference type="EMBL" id="U97040">
    <property type="protein sequence ID" value="AAB57827.1"/>
    <property type="molecule type" value="Genomic_DNA"/>
</dbReference>
<dbReference type="PIR" id="T44948">
    <property type="entry name" value="T44948"/>
</dbReference>
<dbReference type="SMR" id="O06636"/>
<dbReference type="OrthoDB" id="121879at2157"/>
<dbReference type="GO" id="GO:0097589">
    <property type="term" value="C:archaeal-type flagellum"/>
    <property type="evidence" value="ECO:0007669"/>
    <property type="project" value="UniProtKB-SubCell"/>
</dbReference>
<dbReference type="InterPro" id="IPR009205">
    <property type="entry name" value="FlaC_arc"/>
</dbReference>
<dbReference type="Pfam" id="PF05377">
    <property type="entry name" value="FlaC_arch"/>
    <property type="match status" value="1"/>
</dbReference>
<dbReference type="PIRSF" id="PIRSF018660">
    <property type="entry name" value="Archl_flaC"/>
    <property type="match status" value="1"/>
</dbReference>
<comment type="subcellular location">
    <subcellularLocation>
        <location evidence="1">Archaeal flagellum</location>
    </subcellularLocation>
</comment>
<comment type="similarity">
    <text evidence="1">To M.jannaschii FlaC.</text>
</comment>
<protein>
    <recommendedName>
        <fullName>Putative flagella-related protein C</fullName>
    </recommendedName>
</protein>
<gene>
    <name type="primary">flaC</name>
</gene>